<proteinExistence type="inferred from homology"/>
<feature type="chain" id="PRO_1000123684" description="3-dehydroquinate dehydratase">
    <location>
        <begin position="1"/>
        <end position="150"/>
    </location>
</feature>
<feature type="active site" description="Proton acceptor" evidence="1">
    <location>
        <position position="26"/>
    </location>
</feature>
<feature type="active site" description="Proton donor" evidence="1">
    <location>
        <position position="103"/>
    </location>
</feature>
<feature type="binding site" evidence="1">
    <location>
        <position position="77"/>
    </location>
    <ligand>
        <name>substrate</name>
    </ligand>
</feature>
<feature type="binding site" evidence="1">
    <location>
        <position position="83"/>
    </location>
    <ligand>
        <name>substrate</name>
    </ligand>
</feature>
<feature type="binding site" evidence="1">
    <location>
        <position position="90"/>
    </location>
    <ligand>
        <name>substrate</name>
    </ligand>
</feature>
<feature type="binding site" evidence="1">
    <location>
        <begin position="104"/>
        <end position="105"/>
    </location>
    <ligand>
        <name>substrate</name>
    </ligand>
</feature>
<feature type="binding site" evidence="1">
    <location>
        <position position="114"/>
    </location>
    <ligand>
        <name>substrate</name>
    </ligand>
</feature>
<feature type="site" description="Transition state stabilizer" evidence="1">
    <location>
        <position position="21"/>
    </location>
</feature>
<dbReference type="EC" id="4.2.1.10" evidence="1"/>
<dbReference type="EMBL" id="CP001161">
    <property type="protein sequence ID" value="ACL30753.1"/>
    <property type="molecule type" value="Genomic_DNA"/>
</dbReference>
<dbReference type="RefSeq" id="WP_009874357.1">
    <property type="nucleotide sequence ID" value="NC_011833.1"/>
</dbReference>
<dbReference type="SMR" id="B8D9I2"/>
<dbReference type="KEGG" id="bap:BUAP5A_392"/>
<dbReference type="HOGENOM" id="CLU_090968_1_0_6"/>
<dbReference type="OrthoDB" id="9790793at2"/>
<dbReference type="UniPathway" id="UPA00053">
    <property type="reaction ID" value="UER00086"/>
</dbReference>
<dbReference type="Proteomes" id="UP000006904">
    <property type="component" value="Chromosome"/>
</dbReference>
<dbReference type="GO" id="GO:0003855">
    <property type="term" value="F:3-dehydroquinate dehydratase activity"/>
    <property type="evidence" value="ECO:0007669"/>
    <property type="project" value="UniProtKB-UniRule"/>
</dbReference>
<dbReference type="GO" id="GO:0008652">
    <property type="term" value="P:amino acid biosynthetic process"/>
    <property type="evidence" value="ECO:0007669"/>
    <property type="project" value="UniProtKB-KW"/>
</dbReference>
<dbReference type="GO" id="GO:0009073">
    <property type="term" value="P:aromatic amino acid family biosynthetic process"/>
    <property type="evidence" value="ECO:0007669"/>
    <property type="project" value="UniProtKB-KW"/>
</dbReference>
<dbReference type="GO" id="GO:0009423">
    <property type="term" value="P:chorismate biosynthetic process"/>
    <property type="evidence" value="ECO:0007669"/>
    <property type="project" value="UniProtKB-UniRule"/>
</dbReference>
<dbReference type="GO" id="GO:0019631">
    <property type="term" value="P:quinate catabolic process"/>
    <property type="evidence" value="ECO:0007669"/>
    <property type="project" value="TreeGrafter"/>
</dbReference>
<dbReference type="CDD" id="cd00466">
    <property type="entry name" value="DHQase_II"/>
    <property type="match status" value="1"/>
</dbReference>
<dbReference type="Gene3D" id="3.40.50.9100">
    <property type="entry name" value="Dehydroquinase, class II"/>
    <property type="match status" value="1"/>
</dbReference>
<dbReference type="HAMAP" id="MF_00169">
    <property type="entry name" value="AroQ"/>
    <property type="match status" value="1"/>
</dbReference>
<dbReference type="InterPro" id="IPR001874">
    <property type="entry name" value="DHquinase_II"/>
</dbReference>
<dbReference type="InterPro" id="IPR018509">
    <property type="entry name" value="DHquinase_II_CS"/>
</dbReference>
<dbReference type="InterPro" id="IPR036441">
    <property type="entry name" value="DHquinase_II_sf"/>
</dbReference>
<dbReference type="NCBIfam" id="TIGR01088">
    <property type="entry name" value="aroQ"/>
    <property type="match status" value="1"/>
</dbReference>
<dbReference type="NCBIfam" id="NF003804">
    <property type="entry name" value="PRK05395.1-1"/>
    <property type="match status" value="1"/>
</dbReference>
<dbReference type="NCBIfam" id="NF003805">
    <property type="entry name" value="PRK05395.1-2"/>
    <property type="match status" value="1"/>
</dbReference>
<dbReference type="NCBIfam" id="NF003806">
    <property type="entry name" value="PRK05395.1-3"/>
    <property type="match status" value="1"/>
</dbReference>
<dbReference type="NCBIfam" id="NF003807">
    <property type="entry name" value="PRK05395.1-4"/>
    <property type="match status" value="1"/>
</dbReference>
<dbReference type="PANTHER" id="PTHR21272">
    <property type="entry name" value="CATABOLIC 3-DEHYDROQUINASE"/>
    <property type="match status" value="1"/>
</dbReference>
<dbReference type="PANTHER" id="PTHR21272:SF3">
    <property type="entry name" value="CATABOLIC 3-DEHYDROQUINASE"/>
    <property type="match status" value="1"/>
</dbReference>
<dbReference type="Pfam" id="PF01220">
    <property type="entry name" value="DHquinase_II"/>
    <property type="match status" value="1"/>
</dbReference>
<dbReference type="PIRSF" id="PIRSF001399">
    <property type="entry name" value="DHquinase_II"/>
    <property type="match status" value="1"/>
</dbReference>
<dbReference type="SUPFAM" id="SSF52304">
    <property type="entry name" value="Type II 3-dehydroquinate dehydratase"/>
    <property type="match status" value="1"/>
</dbReference>
<dbReference type="PROSITE" id="PS01029">
    <property type="entry name" value="DEHYDROQUINASE_II"/>
    <property type="match status" value="1"/>
</dbReference>
<sequence length="150" mass="17058">MKNNINILLINGPNLNLLGTRETEIYGDITLPDLLKNLEKRAKKLNMSLKHIQSNAEHVLIDKIHSSRKNINYIIINPAAFTHTSIAIRDALIAVEIPFIEIHISNIYSREDFRSHSWLSDISQGVICGLGLDGYHWALETISNRLIHLK</sequence>
<organism>
    <name type="scientific">Buchnera aphidicola subsp. Acyrthosiphon pisum (strain 5A)</name>
    <dbReference type="NCBI Taxonomy" id="563178"/>
    <lineage>
        <taxon>Bacteria</taxon>
        <taxon>Pseudomonadati</taxon>
        <taxon>Pseudomonadota</taxon>
        <taxon>Gammaproteobacteria</taxon>
        <taxon>Enterobacterales</taxon>
        <taxon>Erwiniaceae</taxon>
        <taxon>Buchnera</taxon>
    </lineage>
</organism>
<comment type="function">
    <text evidence="1">Catalyzes a trans-dehydration via an enolate intermediate.</text>
</comment>
<comment type="catalytic activity">
    <reaction evidence="1">
        <text>3-dehydroquinate = 3-dehydroshikimate + H2O</text>
        <dbReference type="Rhea" id="RHEA:21096"/>
        <dbReference type="ChEBI" id="CHEBI:15377"/>
        <dbReference type="ChEBI" id="CHEBI:16630"/>
        <dbReference type="ChEBI" id="CHEBI:32364"/>
        <dbReference type="EC" id="4.2.1.10"/>
    </reaction>
</comment>
<comment type="pathway">
    <text evidence="1">Metabolic intermediate biosynthesis; chorismate biosynthesis; chorismate from D-erythrose 4-phosphate and phosphoenolpyruvate: step 3/7.</text>
</comment>
<comment type="subunit">
    <text evidence="1">Homododecamer.</text>
</comment>
<comment type="similarity">
    <text evidence="1">Belongs to the type-II 3-dehydroquinase family.</text>
</comment>
<reference key="1">
    <citation type="journal article" date="2009" name="Science">
        <title>The dynamics and time scale of ongoing genomic erosion in symbiotic bacteria.</title>
        <authorList>
            <person name="Moran N.A."/>
            <person name="McLaughlin H.J."/>
            <person name="Sorek R."/>
        </authorList>
    </citation>
    <scope>NUCLEOTIDE SEQUENCE [LARGE SCALE GENOMIC DNA]</scope>
    <source>
        <strain>5A</strain>
    </source>
</reference>
<accession>B8D9I2</accession>
<name>AROQ_BUCA5</name>
<keyword id="KW-0028">Amino-acid biosynthesis</keyword>
<keyword id="KW-0057">Aromatic amino acid biosynthesis</keyword>
<keyword id="KW-0456">Lyase</keyword>
<gene>
    <name evidence="1" type="primary">aroQ</name>
    <name type="ordered locus">BUAP5A_392</name>
</gene>
<evidence type="ECO:0000255" key="1">
    <source>
        <dbReference type="HAMAP-Rule" id="MF_00169"/>
    </source>
</evidence>
<protein>
    <recommendedName>
        <fullName evidence="1">3-dehydroquinate dehydratase</fullName>
        <shortName evidence="1">3-dehydroquinase</shortName>
        <ecNumber evidence="1">4.2.1.10</ecNumber>
    </recommendedName>
    <alternativeName>
        <fullName evidence="1">Type II DHQase</fullName>
    </alternativeName>
</protein>